<name>NL1A2_RAT</name>
<gene>
    <name evidence="1" type="primary">Nlrp1a</name>
    <name evidence="12" type="synonym">Nlrp1</name>
</gene>
<sequence length="1218" mass="138406">MEESQSKQESNTRVAQHGSQQDVDPTFQTKRALEKERSKPRPRPLPRVQLQSLPGWSSTSKDVPLSQLIREMDHESRRCIHRSKKKLDRSEHISQGTIPEIYEKRKETISHTQSMEQKYLFQNFTKLLLLQKCCPGGSEKLVRESWHPCVPEEGGHMIEIQDLFDPNLDTEKKPQLVIIEGAAGIGKSTLARQVKRAWDEGQLYRDRFQHVFFFSCRELAQCKQLSLAELIAQGQEVPTAPTRQILSRPEKLLFILDGIDEPAWVLEDQNPELCVHWSQAQPVHTLLGSLLGKSILPEASLMLTARTTALQKLVPSLGQPHRVEVLGFSEFERKDYFYKYFAKERNTIIDFNLIGSIPVLLTLCEVPWVCWLLCTCLEKQMQQGEVLSLTSQTTTALCLKYLSLTIPGQHLSTQLRTLCSLAAEGICQRRTLFSKSDLCKQGLAEDAIATFLKIGVLQRQPSSLSYSFAHLCLQEFFAAMSYILEDSEEAHGDMGNDRTVETLVERYGRQNLFEAPTVRFLLGLLNTREMREMENIFACKFPWETKLKLLQSIIGEPFCQPCHLGLFHCLYENQEEELLTETMLCFPLTASGPNHMEATVFQTNVKRLVIQTDMELMVVTFCITFSHVRSLRLKGKGQQEYKLTAPAMVLYRWTPISEASWKVLFSNLKCTRNLEELDLSGNPLSYSAVRSLCTALRQPGCRLKTLWLVDCGLTSRCCSFLASMLSAHSRLAELDLRLNDLGDNGVRQLCEGLRNPACNLSILRLDQASLSEQVITELRALETKNPKLFISSTWMSHMTMPTENTDGEESLTSSKQQQQQSGDKHMEPLGTDDDFWGPSGPVSTEVVDRERNLYRVRLPMAGSYHCPSTGLHFVVTRAVTIEIGFCAWSQFLHETPLQHSHMVAGPLFDIKAEHGAVTAVCLPHFVSLQEGKVDSSLFHVAHFQDHGMVLETPARVEPHFAVLENPSFSPMGVLLRMIPAVGHFIPITSITLIYYRLYLEDITFHLYLVPNDCTIRKAIDEEELKFQFVRINKPPPVDALYVGSRYIVSSSKEVEILPKELELCYRSPRESQLFSEIYVGNIGSGINLQLTDKKYMNLIWEALLKPGDLRPALPRMASAPKDAPALLHFVDQHREQLVARVTSVDPLLDKLHGLVLSEEDYETVRAEATNQDKMRKLFRGSRSWSWDCKDHFYQALKETHPHLIMDLLEKSGGVSVRL</sequence>
<feature type="chain" id="PRO_0000452881" description="NACHT, LRR and PYD domains-containing protein 1 allele 2">
    <location>
        <begin position="1"/>
        <end position="1218"/>
    </location>
</feature>
<feature type="chain" id="PRO_0000452882" description="NACHT, LRR and PYD domains-containing protein 1a, N-terminus" evidence="4">
    <location>
        <begin position="1"/>
        <end position="968"/>
    </location>
</feature>
<feature type="chain" id="PRO_0000452883" description="NACHT, LRR and PYD domains-containing protein 1a, C-terminus" evidence="4">
    <location>
        <begin position="969"/>
        <end position="1218"/>
    </location>
</feature>
<feature type="domain" description="NACHT" evidence="7">
    <location>
        <begin position="175"/>
        <end position="484"/>
    </location>
</feature>
<feature type="repeat" description="LRR 1" evidence="5">
    <location>
        <begin position="343"/>
        <end position="364"/>
    </location>
</feature>
<feature type="repeat" description="LRR 2" evidence="5">
    <location>
        <begin position="673"/>
        <end position="693"/>
    </location>
</feature>
<feature type="repeat" description="LRR 3" evidence="5">
    <location>
        <begin position="730"/>
        <end position="750"/>
    </location>
</feature>
<feature type="domain" description="FIIND" evidence="8">
    <location>
        <begin position="835"/>
        <end position="1118"/>
    </location>
</feature>
<feature type="domain" description="CARD" evidence="6">
    <location>
        <begin position="1122"/>
        <end position="1211"/>
    </location>
</feature>
<feature type="region of interest" description="Disordered" evidence="9">
    <location>
        <begin position="1"/>
        <end position="61"/>
    </location>
</feature>
<feature type="region of interest" description="Disordered" evidence="9">
    <location>
        <begin position="799"/>
        <end position="842"/>
    </location>
</feature>
<feature type="region of interest" description="ZU5" evidence="4">
    <location>
        <begin position="835"/>
        <end position="968"/>
    </location>
</feature>
<feature type="region of interest" description="UPA" evidence="4">
    <location>
        <begin position="969"/>
        <end position="1118"/>
    </location>
</feature>
<feature type="compositionally biased region" description="Polar residues" evidence="9">
    <location>
        <begin position="7"/>
        <end position="29"/>
    </location>
</feature>
<feature type="compositionally biased region" description="Polar residues" evidence="9">
    <location>
        <begin position="799"/>
        <end position="815"/>
    </location>
</feature>
<feature type="binding site" evidence="7">
    <location>
        <begin position="181"/>
        <end position="188"/>
    </location>
    <ligand>
        <name>ATP</name>
        <dbReference type="ChEBI" id="CHEBI:30616"/>
    </ligand>
</feature>
<feature type="site" description="Trigger for autolytic processing" evidence="4">
    <location>
        <position position="942"/>
    </location>
</feature>
<feature type="site" description="Cleavage; by autolysis" evidence="8">
    <location>
        <begin position="968"/>
        <end position="969"/>
    </location>
</feature>
<keyword id="KW-0067">ATP-binding</keyword>
<keyword id="KW-0963">Cytoplasm</keyword>
<keyword id="KW-0378">Hydrolase</keyword>
<keyword id="KW-0391">Immunity</keyword>
<keyword id="KW-1271">Inflammasome</keyword>
<keyword id="KW-0395">Inflammatory response</keyword>
<keyword id="KW-0399">Innate immunity</keyword>
<keyword id="KW-0433">Leucine-rich repeat</keyword>
<keyword id="KW-1210">Necrosis</keyword>
<keyword id="KW-0547">Nucleotide-binding</keyword>
<keyword id="KW-0539">Nucleus</keyword>
<keyword id="KW-0645">Protease</keyword>
<keyword id="KW-0677">Repeat</keyword>
<keyword id="KW-0832">Ubl conjugation</keyword>
<dbReference type="EC" id="3.4.-.-" evidence="4"/>
<dbReference type="EMBL" id="HM060632">
    <property type="protein sequence ID" value="ADI96229.1"/>
    <property type="molecule type" value="mRNA"/>
</dbReference>
<dbReference type="EMDB" id="EMD-30458"/>
<dbReference type="SMR" id="D9I2G3"/>
<dbReference type="AGR" id="RGD:1310963"/>
<dbReference type="RGD" id="1310963">
    <property type="gene designation" value="Nlrp1a"/>
</dbReference>
<dbReference type="GO" id="GO:0005829">
    <property type="term" value="C:cytosol"/>
    <property type="evidence" value="ECO:0000266"/>
    <property type="project" value="RGD"/>
</dbReference>
<dbReference type="GO" id="GO:0043025">
    <property type="term" value="C:neuronal cell body"/>
    <property type="evidence" value="ECO:0000314"/>
    <property type="project" value="RGD"/>
</dbReference>
<dbReference type="GO" id="GO:0072558">
    <property type="term" value="C:NLRP1 inflammasome complex"/>
    <property type="evidence" value="ECO:0000266"/>
    <property type="project" value="RGD"/>
</dbReference>
<dbReference type="GO" id="GO:0072559">
    <property type="term" value="C:NLRP3 inflammasome complex"/>
    <property type="evidence" value="ECO:0000318"/>
    <property type="project" value="GO_Central"/>
</dbReference>
<dbReference type="GO" id="GO:0005634">
    <property type="term" value="C:nucleus"/>
    <property type="evidence" value="ECO:0000266"/>
    <property type="project" value="RGD"/>
</dbReference>
<dbReference type="GO" id="GO:0032991">
    <property type="term" value="C:protein-containing complex"/>
    <property type="evidence" value="ECO:0000314"/>
    <property type="project" value="RGD"/>
</dbReference>
<dbReference type="GO" id="GO:0005524">
    <property type="term" value="F:ATP binding"/>
    <property type="evidence" value="ECO:0000266"/>
    <property type="project" value="RGD"/>
</dbReference>
<dbReference type="GO" id="GO:0016887">
    <property type="term" value="F:ATP hydrolysis activity"/>
    <property type="evidence" value="ECO:0000266"/>
    <property type="project" value="RGD"/>
</dbReference>
<dbReference type="GO" id="GO:0140608">
    <property type="term" value="F:cysteine-type endopeptidase activator activity"/>
    <property type="evidence" value="ECO:0000266"/>
    <property type="project" value="RGD"/>
</dbReference>
<dbReference type="GO" id="GO:0003690">
    <property type="term" value="F:double-stranded DNA binding"/>
    <property type="evidence" value="ECO:0000266"/>
    <property type="project" value="RGD"/>
</dbReference>
<dbReference type="GO" id="GO:0003725">
    <property type="term" value="F:double-stranded RNA binding"/>
    <property type="evidence" value="ECO:0000266"/>
    <property type="project" value="RGD"/>
</dbReference>
<dbReference type="GO" id="GO:0019899">
    <property type="term" value="F:enzyme binding"/>
    <property type="evidence" value="ECO:0000266"/>
    <property type="project" value="RGD"/>
</dbReference>
<dbReference type="GO" id="GO:0140693">
    <property type="term" value="F:molecular condensate scaffold activity"/>
    <property type="evidence" value="ECO:0000266"/>
    <property type="project" value="RGD"/>
</dbReference>
<dbReference type="GO" id="GO:0038187">
    <property type="term" value="F:pattern recognition receptor activity"/>
    <property type="evidence" value="ECO:0000266"/>
    <property type="project" value="RGD"/>
</dbReference>
<dbReference type="GO" id="GO:0008233">
    <property type="term" value="F:peptidase activity"/>
    <property type="evidence" value="ECO:0007669"/>
    <property type="project" value="UniProtKB-KW"/>
</dbReference>
<dbReference type="GO" id="GO:0019904">
    <property type="term" value="F:protein domain specific binding"/>
    <property type="evidence" value="ECO:0000266"/>
    <property type="project" value="RGD"/>
</dbReference>
<dbReference type="GO" id="GO:0097110">
    <property type="term" value="F:scaffold protein binding"/>
    <property type="evidence" value="ECO:0000353"/>
    <property type="project" value="RGD"/>
</dbReference>
<dbReference type="GO" id="GO:0035591">
    <property type="term" value="F:signaling adaptor activity"/>
    <property type="evidence" value="ECO:0000266"/>
    <property type="project" value="RGD"/>
</dbReference>
<dbReference type="GO" id="GO:0002218">
    <property type="term" value="P:activation of innate immune response"/>
    <property type="evidence" value="ECO:0000318"/>
    <property type="project" value="GO_Central"/>
</dbReference>
<dbReference type="GO" id="GO:0140374">
    <property type="term" value="P:antiviral innate immune response"/>
    <property type="evidence" value="ECO:0000266"/>
    <property type="project" value="RGD"/>
</dbReference>
<dbReference type="GO" id="GO:0071493">
    <property type="term" value="P:cellular response to UV-B"/>
    <property type="evidence" value="ECO:0000266"/>
    <property type="project" value="RGD"/>
</dbReference>
<dbReference type="GO" id="GO:0042742">
    <property type="term" value="P:defense response to bacterium"/>
    <property type="evidence" value="ECO:0000266"/>
    <property type="project" value="RGD"/>
</dbReference>
<dbReference type="GO" id="GO:0051607">
    <property type="term" value="P:defense response to virus"/>
    <property type="evidence" value="ECO:0000266"/>
    <property type="project" value="RGD"/>
</dbReference>
<dbReference type="GO" id="GO:0006954">
    <property type="term" value="P:inflammatory response"/>
    <property type="evidence" value="ECO:0000318"/>
    <property type="project" value="GO_Central"/>
</dbReference>
<dbReference type="GO" id="GO:0097193">
    <property type="term" value="P:intrinsic apoptotic signaling pathway"/>
    <property type="evidence" value="ECO:0000318"/>
    <property type="project" value="GO_Central"/>
</dbReference>
<dbReference type="GO" id="GO:0051245">
    <property type="term" value="P:negative regulation of cellular defense response"/>
    <property type="evidence" value="ECO:0000315"/>
    <property type="project" value="RGD"/>
</dbReference>
<dbReference type="GO" id="GO:0051402">
    <property type="term" value="P:neuron apoptotic process"/>
    <property type="evidence" value="ECO:0000266"/>
    <property type="project" value="RGD"/>
</dbReference>
<dbReference type="GO" id="GO:1904784">
    <property type="term" value="P:NLRP1 inflammasome complex assembly"/>
    <property type="evidence" value="ECO:0000266"/>
    <property type="project" value="RGD"/>
</dbReference>
<dbReference type="GO" id="GO:0050729">
    <property type="term" value="P:positive regulation of inflammatory response"/>
    <property type="evidence" value="ECO:0000266"/>
    <property type="project" value="RGD"/>
</dbReference>
<dbReference type="GO" id="GO:0032731">
    <property type="term" value="P:positive regulation of interleukin-1 beta production"/>
    <property type="evidence" value="ECO:0000266"/>
    <property type="project" value="RGD"/>
</dbReference>
<dbReference type="GO" id="GO:0140639">
    <property type="term" value="P:positive regulation of pyroptotic inflammatory response"/>
    <property type="evidence" value="ECO:0000315"/>
    <property type="project" value="RGD"/>
</dbReference>
<dbReference type="GO" id="GO:0097300">
    <property type="term" value="P:programmed necrotic cell death"/>
    <property type="evidence" value="ECO:0000266"/>
    <property type="project" value="RGD"/>
</dbReference>
<dbReference type="GO" id="GO:0051260">
    <property type="term" value="P:protein homooligomerization"/>
    <property type="evidence" value="ECO:0000266"/>
    <property type="project" value="RGD"/>
</dbReference>
<dbReference type="GO" id="GO:0070269">
    <property type="term" value="P:pyroptotic inflammatory response"/>
    <property type="evidence" value="ECO:0000266"/>
    <property type="project" value="RGD"/>
</dbReference>
<dbReference type="GO" id="GO:0042981">
    <property type="term" value="P:regulation of apoptotic process"/>
    <property type="evidence" value="ECO:0007669"/>
    <property type="project" value="InterPro"/>
</dbReference>
<dbReference type="GO" id="GO:0050727">
    <property type="term" value="P:regulation of inflammatory response"/>
    <property type="evidence" value="ECO:0000266"/>
    <property type="project" value="RGD"/>
</dbReference>
<dbReference type="GO" id="GO:0032495">
    <property type="term" value="P:response to muramyl dipeptide"/>
    <property type="evidence" value="ECO:0000266"/>
    <property type="project" value="RGD"/>
</dbReference>
<dbReference type="GO" id="GO:0097264">
    <property type="term" value="P:self proteolysis"/>
    <property type="evidence" value="ECO:0000266"/>
    <property type="project" value="RGD"/>
</dbReference>
<dbReference type="GO" id="GO:0007165">
    <property type="term" value="P:signal transduction"/>
    <property type="evidence" value="ECO:0000266"/>
    <property type="project" value="RGD"/>
</dbReference>
<dbReference type="CDD" id="cd08330">
    <property type="entry name" value="CARD_ASC_NALP1"/>
    <property type="match status" value="1"/>
</dbReference>
<dbReference type="FunFam" id="1.10.533.10:FF:000013">
    <property type="entry name" value="Apoptosis-associated speck-like protein containing a CARD"/>
    <property type="match status" value="1"/>
</dbReference>
<dbReference type="FunFam" id="3.40.50.300:FF:000897">
    <property type="entry name" value="NLR family pyrin domain containing 1"/>
    <property type="match status" value="1"/>
</dbReference>
<dbReference type="Gene3D" id="1.10.533.10">
    <property type="entry name" value="Death Domain, Fas"/>
    <property type="match status" value="1"/>
</dbReference>
<dbReference type="Gene3D" id="3.40.50.300">
    <property type="entry name" value="P-loop containing nucleotide triphosphate hydrolases"/>
    <property type="match status" value="1"/>
</dbReference>
<dbReference type="Gene3D" id="3.80.10.10">
    <property type="entry name" value="Ribonuclease Inhibitor"/>
    <property type="match status" value="1"/>
</dbReference>
<dbReference type="InterPro" id="IPR001315">
    <property type="entry name" value="CARD"/>
</dbReference>
<dbReference type="InterPro" id="IPR033516">
    <property type="entry name" value="CARD8/ASC/NALP1_CARD"/>
</dbReference>
<dbReference type="InterPro" id="IPR011029">
    <property type="entry name" value="DEATH-like_dom_sf"/>
</dbReference>
<dbReference type="InterPro" id="IPR025307">
    <property type="entry name" value="FIIND_dom"/>
</dbReference>
<dbReference type="InterPro" id="IPR001611">
    <property type="entry name" value="Leu-rich_rpt"/>
</dbReference>
<dbReference type="InterPro" id="IPR032675">
    <property type="entry name" value="LRR_dom_sf"/>
</dbReference>
<dbReference type="InterPro" id="IPR007111">
    <property type="entry name" value="NACHT_NTPase"/>
</dbReference>
<dbReference type="InterPro" id="IPR041267">
    <property type="entry name" value="NLRP_HD2"/>
</dbReference>
<dbReference type="InterPro" id="IPR051249">
    <property type="entry name" value="NLRP_Inflammasome"/>
</dbReference>
<dbReference type="InterPro" id="IPR041075">
    <property type="entry name" value="NOD1/2_WH"/>
</dbReference>
<dbReference type="InterPro" id="IPR027417">
    <property type="entry name" value="P-loop_NTPase"/>
</dbReference>
<dbReference type="PANTHER" id="PTHR46985">
    <property type="entry name" value="NACHT, LRR AND PYD DOMAINS-CONTAINING PROTEIN 1"/>
    <property type="match status" value="1"/>
</dbReference>
<dbReference type="PANTHER" id="PTHR46985:SF3">
    <property type="entry name" value="NACHT, LRR AND PYD DOMAINS-CONTAINING PROTEIN 1"/>
    <property type="match status" value="1"/>
</dbReference>
<dbReference type="Pfam" id="PF00619">
    <property type="entry name" value="CARD"/>
    <property type="match status" value="1"/>
</dbReference>
<dbReference type="Pfam" id="PF13553">
    <property type="entry name" value="FIIND"/>
    <property type="match status" value="1"/>
</dbReference>
<dbReference type="Pfam" id="PF13516">
    <property type="entry name" value="LRR_6"/>
    <property type="match status" value="2"/>
</dbReference>
<dbReference type="Pfam" id="PF05729">
    <property type="entry name" value="NACHT"/>
    <property type="match status" value="1"/>
</dbReference>
<dbReference type="Pfam" id="PF17776">
    <property type="entry name" value="NLRC4_HD2"/>
    <property type="match status" value="1"/>
</dbReference>
<dbReference type="Pfam" id="PF17779">
    <property type="entry name" value="NOD2_WH"/>
    <property type="match status" value="1"/>
</dbReference>
<dbReference type="Pfam" id="PF23679">
    <property type="entry name" value="UPA-FIIND"/>
    <property type="match status" value="1"/>
</dbReference>
<dbReference type="PRINTS" id="PR00364">
    <property type="entry name" value="DISEASERSIST"/>
</dbReference>
<dbReference type="SMART" id="SM00368">
    <property type="entry name" value="LRR_RI"/>
    <property type="match status" value="3"/>
</dbReference>
<dbReference type="SUPFAM" id="SSF47986">
    <property type="entry name" value="DEATH domain"/>
    <property type="match status" value="1"/>
</dbReference>
<dbReference type="SUPFAM" id="SSF52540">
    <property type="entry name" value="P-loop containing nucleoside triphosphate hydrolases"/>
    <property type="match status" value="1"/>
</dbReference>
<dbReference type="SUPFAM" id="SSF52047">
    <property type="entry name" value="RNI-like"/>
    <property type="match status" value="1"/>
</dbReference>
<dbReference type="PROSITE" id="PS50209">
    <property type="entry name" value="CARD"/>
    <property type="match status" value="1"/>
</dbReference>
<dbReference type="PROSITE" id="PS51830">
    <property type="entry name" value="FIIND"/>
    <property type="match status" value="1"/>
</dbReference>
<dbReference type="PROSITE" id="PS50837">
    <property type="entry name" value="NACHT"/>
    <property type="match status" value="1"/>
</dbReference>
<evidence type="ECO:0000250" key="1">
    <source>
        <dbReference type="UniProtKB" id="D9I2F9"/>
    </source>
</evidence>
<evidence type="ECO:0000250" key="2">
    <source>
        <dbReference type="UniProtKB" id="Q2LKU9"/>
    </source>
</evidence>
<evidence type="ECO:0000250" key="3">
    <source>
        <dbReference type="UniProtKB" id="Q2LKW6"/>
    </source>
</evidence>
<evidence type="ECO:0000250" key="4">
    <source>
        <dbReference type="UniProtKB" id="Q9C000"/>
    </source>
</evidence>
<evidence type="ECO:0000255" key="5"/>
<evidence type="ECO:0000255" key="6">
    <source>
        <dbReference type="PROSITE-ProRule" id="PRU00046"/>
    </source>
</evidence>
<evidence type="ECO:0000255" key="7">
    <source>
        <dbReference type="PROSITE-ProRule" id="PRU00136"/>
    </source>
</evidence>
<evidence type="ECO:0000255" key="8">
    <source>
        <dbReference type="PROSITE-ProRule" id="PRU01174"/>
    </source>
</evidence>
<evidence type="ECO:0000256" key="9">
    <source>
        <dbReference type="SAM" id="MobiDB-lite"/>
    </source>
</evidence>
<evidence type="ECO:0000269" key="10">
    <source>
    </source>
</evidence>
<evidence type="ECO:0000269" key="11">
    <source>
    </source>
</evidence>
<evidence type="ECO:0000303" key="12">
    <source>
    </source>
</evidence>
<evidence type="ECO:0000305" key="13"/>
<evidence type="ECO:0000305" key="14">
    <source>
    </source>
</evidence>
<evidence type="ECO:0000312" key="15">
    <source>
        <dbReference type="EMBL" id="ADI96229.1"/>
    </source>
</evidence>
<protein>
    <recommendedName>
        <fullName evidence="13">NACHT, LRR and PYD domains-containing protein 1 allele 2</fullName>
        <ecNumber evidence="4">3.4.-.-</ecNumber>
    </recommendedName>
    <component>
        <recommendedName>
            <fullName evidence="13">NACHT, LRR and PYD domains-containing protein 1a, C-terminus</fullName>
            <shortName evidence="4">Nlrp1a-CT</shortName>
        </recommendedName>
    </component>
    <component>
        <recommendedName>
            <fullName evidence="13">NACHT, LRR and PYD domains-containing protein 1a, N-terminus</fullName>
            <shortName evidence="4">Nlrp1a-NT</shortName>
        </recommendedName>
    </component>
</protein>
<accession>D9I2G3</accession>
<reference key="1">
    <citation type="journal article" date="2010" name="PLoS Pathog.">
        <title>Susceptibility to anthrax lethal toxin-induced rat death is controlled by a single chromosome 10 locus that includes rNlrp1.</title>
        <authorList>
            <person name="Newman Z.L."/>
            <person name="Printz M.P."/>
            <person name="Liu S."/>
            <person name="Crown D."/>
            <person name="Breen L."/>
            <person name="Miller-Randolph S."/>
            <person name="Flodman P."/>
            <person name="Leppla S.H."/>
            <person name="Moayeri M."/>
        </authorList>
    </citation>
    <scope>NUCLEOTIDE SEQUENCE [MRNA]</scope>
    <scope>FUNCTION</scope>
    <scope>ACTIVITY REGULATION</scope>
    <scope>PROTEOLYTIC CLEAVAGE BY ANTHRAX LETHAL TOXIN</scope>
    <source>
        <strain evidence="15">CDF</strain>
    </source>
</reference>
<reference key="2">
    <citation type="journal article" date="2019" name="Cell Death Dis.">
        <title>DPP8/9 inhibitors are universal activators of functional NLRP1 alleles.</title>
        <authorList>
            <person name="Gai K."/>
            <person name="Okondo M.C."/>
            <person name="Rao S.D."/>
            <person name="Chui A.J."/>
            <person name="Ball D.P."/>
            <person name="Johnson D.C."/>
            <person name="Bachovchin D.A."/>
        </authorList>
    </citation>
    <scope>FUNCTION</scope>
    <scope>ACTIVITY REGULATION</scope>
</reference>
<reference key="3">
    <citation type="journal article" date="2020" name="Immunol. Rev.">
        <title>The NLRP1 and CARD8 inflammasomes.</title>
        <authorList>
            <person name="Taabazuing C.Y."/>
            <person name="Griswold A.R."/>
            <person name="Bachovchin D.A."/>
        </authorList>
    </citation>
    <scope>REVIEW</scope>
</reference>
<comment type="function">
    <text evidence="2 3 4 10 11">Acts as the sensor component of the Nlrp1a inflammasome, which mediates inflammasome activation in response to various pathogen-associated signals, leading to subsequent pyroptosis (By similarity). Inflammasomes are supramolecular complexes that assemble in the cytosol in response to pathogens and other damage-associated signals and play critical roles in innate immunity and inflammation (By similarity). Acts as a recognition receptor (PRR): recognizes specific pathogens and other damage-associated signals, such as B.anthracis lethal toxin (LT) or Val-boroPro inhibitor, and mediates the formation of the inflammasome polymeric complex (PubMed:20502689, PubMed:31383852). In response to pathogen-associated signals, the N-terminal part of Nlrp1a is degraded by the proteasome, releasing the cleaved C-terminal part of the protein (NACHT, LRR and PYD domains-containing protein 1a, C-terminus), which polymerizes to initiate the formation of the inflammasome complex: the inflammasome directly recruits pro-caspase-1 (proCASP1) independently of PYCARD/ASC and promotes caspase-1 (CASP1) activation, which subsequently cleaves and activates inflammatory cytokines IL1B and IL18 and gasdermin-D (GSDMD), leading to pyroptosis (By similarity). In the absence of GSDMD expression, the Nlrp1a inflammasome is able to recruit and activate CASP8, leading to activation of gasdermin-E (GSDME) (By similarity).</text>
</comment>
<comment type="function">
    <molecule>NACHT, LRR and PYD domains-containing protein 1 allele 2</molecule>
    <text evidence="4">Constitutes the precursor of the Nlrp1a inflammasome, which mediates autoproteolytic processing within the FIIND domain to generate the N-terminal and C-terminal parts, which are associated non-covalently in absence of pathogens and other damage-associated signals.</text>
</comment>
<comment type="function">
    <molecule>NACHT, LRR and PYD domains-containing protein 1a, N-terminus</molecule>
    <text evidence="4">Regulatory part that prevents formation of the Nlrp1a inflammasome: in absence of pathogens and other damage-associated signals, interacts with the C-terminal part of Nlrp1a (NACHT, LRR and PYD domains-containing protein 1a, C-terminus), preventing activation of the Nlrp1a inflammasome. In response to pathogen-associated signals, this part is ubiquitinated by the N-end rule pathway and degraded by the proteasome, releasing the cleaved C-terminal part of the protein, which polymerizes and forms the Nlrp1a inflammasome.</text>
</comment>
<comment type="function">
    <molecule>NACHT, LRR and PYD domains-containing protein 1a, C-terminus</molecule>
    <text evidence="4">Constitutes the active part of the Nlrp1a inflammasome. In absence of pathogens and other damage-associated signals, interacts with the N-terminal part of Nlrp1a (NACHT, LRR and PYD domains-containing protein 1a, N-terminus), preventing activation of the Nlrp1a inflammasome. In response to pathogen-associated signals, the N-terminal part of Nlrp1a is degraded by the proteasome, releasing this form, which polymerizes to form the Nlrp1a inflammasome complex: the Nlrp1a inflammasome complex then directly recruits pro-caspase-1 (proCASP1) and promotes caspase-1 (CASP1) activation, leading to gasdermin-D (GSDMD) cleavage and subsequent pyroptosis.</text>
</comment>
<comment type="activity regulation">
    <text evidence="1 4 10 11">Activated by cleavage by B.anthracis lethal toxin (LT) endopeptidase (PubMed:20502689). Cleavage by LT promotes ubiquitination and degradation of the N-terminal part, releasing the cleaved C-terminal part of the protein (NACHT, LRR and PYD domains-containing protein 1a, C-terminus), which polymerizes and forms the Nlrp1a inflammasome (By similarity). Nlrp1a inflammasome is inhibited by DPP8 and DPP9, which sequester the C-terminal fragment of Nlrp1a (NACHT, LRR and PYD domains-containing protein 1a, C-terminus) in a ternary complex, thereby preventing Nlrp1a oligomerization and activation (By similarity). Nlrp1a inflammasome is weakly activated by Val-boroPro (Talabostat, PT-100), an inhibitor of dipeptidyl peptidases DPP8 and DPP9 (PubMed:31383852). Val-boroPro relieves inhibition of DPP8 and/or DPP9 by promoting disruption of the ternary complex, releasing its C-terminal part from autoinhibition (By similarity). Weakly activated by Toxoplasma gondii (PubMed:31383852).</text>
</comment>
<comment type="subunit">
    <text evidence="1 4">Interacts (via LRR repeats) with BCL2 and BCL2L1 (via the loop between motifs BH4 and BH3). Interacts with NOD2; this interaction is enhanced in the presence of muramyl dipeptide (MDP) and increases IL1B release. Interacts with EIF2AK2/PKR; this interaction requires EIF2AK2 activity, is accompanied by EIF2AK2 autophosphorylation and promotes inflammasome assembly in response to danger-associated signals. Interacts with MEFV; this interaction targets Nlrp1a to degradation by autophagy, hence preventing excessive IL1B- and IL18-mediated inflammation. Interacts with DPP9; leading to inhibit activation of the inflammasome (By similarity). DPP9 acts via formation of a ternary complex, composed of a DPP9 homodimer, one full-length NLRP1 protein, and one cleaved C-terminus of Nlrp1a (NACHT, LRR and PYD domains-containing protein 1a, C-terminus) (By similarity). Interacts with DPP8; leading to inhibit activation of the inflammasome, probably via formation of a ternary complex with DPP8 (By similarity).</text>
</comment>
<comment type="subunit">
    <molecule>NACHT, LRR and PYD domains-containing protein 1a, N-terminus</molecule>
    <text evidence="4">Interacts with the C-terminal part of Nlrp1a (NACHT, LRR and PYD domains-containing protein 1a, C-terminus) in absence of pathogens and other damage-associated signals.</text>
</comment>
<comment type="subunit">
    <molecule>NACHT, LRR and PYD domains-containing protein 1a, C-terminus</molecule>
    <text evidence="4">Interacts with the N-terminal part of Nlrp1a (NACHT, LRR and PYD domains-containing protein 1a, N-terminus) in absence of pathogens and other damage-associated signals (By similarity). Homomultimer; forms the Nlrp1a inflammasome polymeric complex, a filament composed of homopolymers of this form in response to pathogens and other damage-associated signals (By similarity). The Nlrp1a inflammasome polymeric complex directly recruits pro-caspase-1 (proCASP1) independently of PYCARD/ASC (By similarity). Interacts (via CARD domain) with CASP1 (via CARD domain); leading to CASP1 activation (By similarity).</text>
</comment>
<comment type="subcellular location">
    <subcellularLocation>
        <location evidence="4">Cytoplasm</location>
        <location evidence="4">Cytosol</location>
    </subcellularLocation>
    <subcellularLocation>
        <location evidence="4">Cytoplasm</location>
    </subcellularLocation>
    <subcellularLocation>
        <location evidence="4">Nucleus</location>
    </subcellularLocation>
</comment>
<comment type="subcellular location">
    <molecule>NACHT, LRR and PYD domains-containing protein 1a, C-terminus</molecule>
    <subcellularLocation>
        <location evidence="4">Inflammasome</location>
    </subcellularLocation>
</comment>
<comment type="domain">
    <text evidence="3">The leucine-rich repeat (LRR) domain may be involved in autoinhibition in the absence of activating signal, possibly through intramolecular interaction with the NACHT domain.</text>
</comment>
<comment type="domain">
    <text evidence="3">The FIIND (domain with function to find) region is involved in homomerization, but not in CASP1-binding. Autocatalytic cleavage in this region occurs constitutively, prior to activation signals, and is required for inflammasome activity (IL1B release), possibly by facilitating CASP1 binding. Both N- and C-terminal fragments remain associated.</text>
</comment>
<comment type="domain">
    <molecule>NACHT, LRR and PYD domains-containing protein 1a, C-terminus</molecule>
    <text evidence="4">The C-terminal part of Nlrp1a oligomerizes to form the core of the Nlrp1a inflammasome filament: in the filament, the CARD domains form a central helical filaments that are promoted by oligomerized, but flexibly linked, UPA regions surrounding the filaments. The UPA region reduces the threshold needed for filament formation and signaling.</text>
</comment>
<comment type="PTM">
    <molecule>NACHT, LRR and PYD domains-containing protein 1 allele 2</molecule>
    <text evidence="4">Autocatalytically cleaved. Autocatalytic cleavage in FIIND region occurs constitutively, prior to activation signals, and is required for inflammasome activity (IL1B release), possibly by facilitating CASP1 binding. Both N- and C-terminal parts remain associated non-covalently.</text>
</comment>
<comment type="PTM">
    <molecule>NACHT, LRR and PYD domains-containing protein 1a, N-terminus</molecule>
    <text evidence="14">(Microbial infection) Cleavage by B.anthracis lethal toxin (LT) endopeptidase promotes ubiquitination and degradation of the N-terminal part, releasing the cleaved C-terminal part of the protein (NACHT, LRR and PYD domains-containing protein 1a, C-terminus), which polymerizes and forms the Nlrp1a inflammasome.</text>
</comment>
<comment type="PTM">
    <molecule>NACHT, LRR and PYD domains-containing protein 1a, N-terminus</molecule>
    <text evidence="4">Ubiquitinated in response to pathogen-associated signals, leading to its degradation by the proteasome and subsequent release of the cleaved C-terminal part of the protein (NACHT, LRR and PYD domains-containing protein 1a, C-terminus), which polymerizes and forms the Nlrp1a inflammasome.</text>
</comment>
<comment type="polymorphism">
    <text evidence="10">Nlrp1a gene is extremely polymorphic. 5 alleles have been described: 1 (AC D9I2F9), 2 (this entry), 3 (AC D9I2H0), 4 (AC D9I2G1) and 5 (AC D9I2G4).</text>
</comment>
<comment type="similarity">
    <text evidence="13">Belongs to the NLRP family.</text>
</comment>
<proteinExistence type="evidence at protein level"/>
<organism>
    <name type="scientific">Rattus norvegicus</name>
    <name type="common">Rat</name>
    <dbReference type="NCBI Taxonomy" id="10116"/>
    <lineage>
        <taxon>Eukaryota</taxon>
        <taxon>Metazoa</taxon>
        <taxon>Chordata</taxon>
        <taxon>Craniata</taxon>
        <taxon>Vertebrata</taxon>
        <taxon>Euteleostomi</taxon>
        <taxon>Mammalia</taxon>
        <taxon>Eutheria</taxon>
        <taxon>Euarchontoglires</taxon>
        <taxon>Glires</taxon>
        <taxon>Rodentia</taxon>
        <taxon>Myomorpha</taxon>
        <taxon>Muroidea</taxon>
        <taxon>Muridae</taxon>
        <taxon>Murinae</taxon>
        <taxon>Rattus</taxon>
    </lineage>
</organism>